<organism>
    <name type="scientific">Acanthamoeba polyphaga mimivirus</name>
    <name type="common">APMV</name>
    <dbReference type="NCBI Taxonomy" id="212035"/>
    <lineage>
        <taxon>Viruses</taxon>
        <taxon>Varidnaviria</taxon>
        <taxon>Bamfordvirae</taxon>
        <taxon>Nucleocytoviricota</taxon>
        <taxon>Megaviricetes</taxon>
        <taxon>Imitervirales</taxon>
        <taxon>Mimiviridae</taxon>
        <taxon>Megamimivirinae</taxon>
        <taxon>Mimivirus</taxon>
        <taxon>Mimivirus bradfordmassiliense</taxon>
    </lineage>
</organism>
<gene>
    <name type="ordered locus">MIMI_L100</name>
</gene>
<organismHost>
    <name type="scientific">Acanthamoeba polyphaga</name>
    <name type="common">Amoeba</name>
    <dbReference type="NCBI Taxonomy" id="5757"/>
</organismHost>
<protein>
    <recommendedName>
        <fullName>Putative ankyrin repeat protein L100</fullName>
    </recommendedName>
</protein>
<sequence length="602" mass="68515">MSQKIYFKILRFDKTHNDHVYLPGENSVENFQTEGSCVPGRLYFCDPSDPKQNICRYLHYGDVLVDITLPTNDPDFKMIVDPSGTKCCANKIIIGTERELSDPETFAYMASHGVDIHKNYIIHWAFKNFHDRVLFYLLKTNLNENRLRIVEHIFKNPSSLISNRNYNFYIVNFLQRFKKHLNSLTDNQYSDIITNLINLSNKIIEKYFEDMTGNKNFGLDIPEKDWCSYIIENDLDKGSISKILDWSFKNNKKMIIEYVISLFIEDYHYLEKIFSLSCKYHDSRIAEILIKKSINKERCLISACEAGFLEIVECLVKQDVNINLLKGTPLVTACQFGHLLIVDFLVNNSADIHIRDNAPILYACRYGHVDIVDYLIGKGIDIHTVSSQALINACNRGHLNVMELLVEKGADIRSVENILVVEACRNTNADILRFLVRIGVDVLSKGVEPLIVACERGQLAIVQYLIDIGIDICANDNEALIKSCRSGFANIVNLLIENGADVKARDNEALIIACEKCNHTIVTILVSNGADITARNNEALIRACHNEAVGKYFIDFLIEKGADVHARNDIVFDFIHKLFAGNIPKSLKFPFSKNQSDSKLIH</sequence>
<feature type="chain" id="PRO_0000067155" description="Putative ankyrin repeat protein L100">
    <location>
        <begin position="1"/>
        <end position="602"/>
    </location>
</feature>
<feature type="repeat" description="ANK 1">
    <location>
        <begin position="133"/>
        <end position="162"/>
    </location>
</feature>
<feature type="repeat" description="ANK 2">
    <location>
        <begin position="269"/>
        <end position="294"/>
    </location>
</feature>
<feature type="repeat" description="ANK 3">
    <location>
        <begin position="295"/>
        <end position="324"/>
    </location>
</feature>
<feature type="repeat" description="ANK 4">
    <location>
        <begin position="325"/>
        <end position="354"/>
    </location>
</feature>
<feature type="repeat" description="ANK 5">
    <location>
        <begin position="355"/>
        <end position="384"/>
    </location>
</feature>
<feature type="repeat" description="ANK 6">
    <location>
        <begin position="386"/>
        <end position="414"/>
    </location>
</feature>
<feature type="repeat" description="ANK 7">
    <location>
        <begin position="416"/>
        <end position="444"/>
    </location>
</feature>
<feature type="repeat" description="ANK 8">
    <location>
        <begin position="445"/>
        <end position="474"/>
    </location>
</feature>
<feature type="repeat" description="ANK 9">
    <location>
        <begin position="476"/>
        <end position="504"/>
    </location>
</feature>
<feature type="repeat" description="ANK 10">
    <location>
        <begin position="506"/>
        <end position="534"/>
    </location>
</feature>
<feature type="repeat" description="ANK 11">
    <location>
        <begin position="536"/>
        <end position="566"/>
    </location>
</feature>
<dbReference type="EMBL" id="AY653733">
    <property type="protein sequence ID" value="AAV50375.1"/>
    <property type="molecule type" value="Genomic_DNA"/>
</dbReference>
<dbReference type="SMR" id="Q5UPH0"/>
<dbReference type="KEGG" id="vg:9924698"/>
<dbReference type="OrthoDB" id="32433at10239"/>
<dbReference type="Proteomes" id="UP000001134">
    <property type="component" value="Genome"/>
</dbReference>
<dbReference type="Gene3D" id="1.25.40.20">
    <property type="entry name" value="Ankyrin repeat-containing domain"/>
    <property type="match status" value="2"/>
</dbReference>
<dbReference type="InterPro" id="IPR002110">
    <property type="entry name" value="Ankyrin_rpt"/>
</dbReference>
<dbReference type="InterPro" id="IPR036770">
    <property type="entry name" value="Ankyrin_rpt-contain_sf"/>
</dbReference>
<dbReference type="PANTHER" id="PTHR24188">
    <property type="entry name" value="ANKYRIN REPEAT PROTEIN"/>
    <property type="match status" value="1"/>
</dbReference>
<dbReference type="PANTHER" id="PTHR24188:SF29">
    <property type="entry name" value="GH09064P"/>
    <property type="match status" value="1"/>
</dbReference>
<dbReference type="Pfam" id="PF00023">
    <property type="entry name" value="Ank"/>
    <property type="match status" value="1"/>
</dbReference>
<dbReference type="Pfam" id="PF12796">
    <property type="entry name" value="Ank_2"/>
    <property type="match status" value="3"/>
</dbReference>
<dbReference type="SMART" id="SM00248">
    <property type="entry name" value="ANK"/>
    <property type="match status" value="10"/>
</dbReference>
<dbReference type="SUPFAM" id="SSF48403">
    <property type="entry name" value="Ankyrin repeat"/>
    <property type="match status" value="1"/>
</dbReference>
<dbReference type="PROSITE" id="PS50297">
    <property type="entry name" value="ANK_REP_REGION"/>
    <property type="match status" value="1"/>
</dbReference>
<dbReference type="PROSITE" id="PS50088">
    <property type="entry name" value="ANK_REPEAT"/>
    <property type="match status" value="6"/>
</dbReference>
<keyword id="KW-0040">ANK repeat</keyword>
<keyword id="KW-1185">Reference proteome</keyword>
<keyword id="KW-0677">Repeat</keyword>
<reference key="1">
    <citation type="journal article" date="2004" name="Science">
        <title>The 1.2-megabase genome sequence of Mimivirus.</title>
        <authorList>
            <person name="Raoult D."/>
            <person name="Audic S."/>
            <person name="Robert C."/>
            <person name="Abergel C."/>
            <person name="Renesto P."/>
            <person name="Ogata H."/>
            <person name="La Scola B."/>
            <person name="Susan M."/>
            <person name="Claverie J.-M."/>
        </authorList>
    </citation>
    <scope>NUCLEOTIDE SEQUENCE [LARGE SCALE GENOMIC DNA]</scope>
    <source>
        <strain>Rowbotham-Bradford</strain>
    </source>
</reference>
<name>YL100_MIMIV</name>
<accession>Q5UPH0</accession>
<proteinExistence type="predicted"/>